<accession>Q4WHE1</accession>
<keyword id="KW-0325">Glycoprotein</keyword>
<keyword id="KW-0406">Ion transport</keyword>
<keyword id="KW-0408">Iron</keyword>
<keyword id="KW-0410">Iron transport</keyword>
<keyword id="KW-0472">Membrane</keyword>
<keyword id="KW-1185">Reference proteome</keyword>
<keyword id="KW-0812">Transmembrane</keyword>
<keyword id="KW-1133">Transmembrane helix</keyword>
<keyword id="KW-0813">Transport</keyword>
<dbReference type="EMBL" id="AAHF01000008">
    <property type="protein sequence ID" value="EAL87664.2"/>
    <property type="molecule type" value="Genomic_DNA"/>
</dbReference>
<dbReference type="RefSeq" id="XP_749702.2">
    <property type="nucleotide sequence ID" value="XM_744609.2"/>
</dbReference>
<dbReference type="SMR" id="Q4WHE1"/>
<dbReference type="STRING" id="330879.Q4WHE1"/>
<dbReference type="GlyCosmos" id="Q4WHE1">
    <property type="glycosylation" value="1 site, No reported glycans"/>
</dbReference>
<dbReference type="EnsemblFungi" id="EAL87664">
    <property type="protein sequence ID" value="EAL87664"/>
    <property type="gene ID" value="AFUA_2G05730"/>
</dbReference>
<dbReference type="GeneID" id="3507165"/>
<dbReference type="KEGG" id="afm:AFUA_2G05730"/>
<dbReference type="VEuPathDB" id="FungiDB:Afu2g05730"/>
<dbReference type="eggNOG" id="KOG0254">
    <property type="taxonomic scope" value="Eukaryota"/>
</dbReference>
<dbReference type="HOGENOM" id="CLU_012970_2_0_1"/>
<dbReference type="InParanoid" id="Q4WHE1"/>
<dbReference type="OMA" id="PWKGKGL"/>
<dbReference type="OrthoDB" id="2241241at2759"/>
<dbReference type="Proteomes" id="UP000002530">
    <property type="component" value="Chromosome 2"/>
</dbReference>
<dbReference type="GO" id="GO:0005886">
    <property type="term" value="C:plasma membrane"/>
    <property type="evidence" value="ECO:0000318"/>
    <property type="project" value="GO_Central"/>
</dbReference>
<dbReference type="GO" id="GO:0015343">
    <property type="term" value="F:siderophore-iron transmembrane transporter activity"/>
    <property type="evidence" value="ECO:0000318"/>
    <property type="project" value="GO_Central"/>
</dbReference>
<dbReference type="GO" id="GO:0010106">
    <property type="term" value="P:cellular response to iron ion starvation"/>
    <property type="evidence" value="ECO:0000270"/>
    <property type="project" value="AspGD"/>
</dbReference>
<dbReference type="GO" id="GO:0055085">
    <property type="term" value="P:transmembrane transport"/>
    <property type="evidence" value="ECO:0000318"/>
    <property type="project" value="GO_Central"/>
</dbReference>
<dbReference type="FunFam" id="1.20.1250.20:FF:000510">
    <property type="entry name" value="Siderophore iron transporter mirC"/>
    <property type="match status" value="1"/>
</dbReference>
<dbReference type="FunFam" id="1.20.1250.20:FF:000533">
    <property type="entry name" value="Siderophore iron transporter mirC"/>
    <property type="match status" value="1"/>
</dbReference>
<dbReference type="Gene3D" id="1.20.1250.20">
    <property type="entry name" value="MFS general substrate transporter like domains"/>
    <property type="match status" value="2"/>
</dbReference>
<dbReference type="InterPro" id="IPR011701">
    <property type="entry name" value="MFS"/>
</dbReference>
<dbReference type="InterPro" id="IPR020846">
    <property type="entry name" value="MFS_dom"/>
</dbReference>
<dbReference type="InterPro" id="IPR036259">
    <property type="entry name" value="MFS_trans_sf"/>
</dbReference>
<dbReference type="PANTHER" id="PTHR23501">
    <property type="entry name" value="MAJOR FACILITATOR SUPERFAMILY"/>
    <property type="match status" value="1"/>
</dbReference>
<dbReference type="PANTHER" id="PTHR23501:SF87">
    <property type="entry name" value="SIDEROPHORE IRON TRANSPORTER 2"/>
    <property type="match status" value="1"/>
</dbReference>
<dbReference type="Pfam" id="PF07690">
    <property type="entry name" value="MFS_1"/>
    <property type="match status" value="1"/>
</dbReference>
<dbReference type="SUPFAM" id="SSF103473">
    <property type="entry name" value="MFS general substrate transporter"/>
    <property type="match status" value="1"/>
</dbReference>
<dbReference type="PROSITE" id="PS50850">
    <property type="entry name" value="MFS"/>
    <property type="match status" value="1"/>
</dbReference>
<sequence>MPFLDHRTGPSYGTIDQMEQHSDDEGERFLQEQCDTGRFSSDITSISEDSVQEGVRKIEAINLTWTARSLVIAYVSIFLMSFCTSLEGQTVMSLGAYATSAFSKHSLISTVLVVQNVVNAVIKPPMAKVADVFGRFEAFCVSILIYVLGYIQMAASTNVQTYASAQIFYSAGSTGLQILQQVFIADSSNLLNRAFLALLPEFPFLVTVWIGPTIADAVLKHASWRWGYGMWSIILPASFLPLALSLLLNQRKARRLNLIKPKSRPRGGVFAVLRRTWYDLDMGGLILLSAAVTLILVPLTLAANSKNGWKSDSIVAMIVVGLFCLIALPFWESSKRLAPKPLLSLHLLKQRTALAGCTLAFWYFMAFYFSVQPYFYSYLQVVQGYDVATAGRVTQTFAFTSTIAAFAVSILIKYTRRYRAFVIAGCVVYIIGMVLMMVTRHEGSTPAQILVTQVVVGIGGGLLNVPVQLGVQASASHQEVAAATAMFLTSMEMGGAVGAALSGAVWTHNIPRKLRLYLPEENKGDADAIFGKITKALSYPLGSPVRVAINQAYQETFKKLLILALIAIIPLVPLSLAMEDYKLDKMSEEPLVDPVPAEEGEIEPNRHVKRT</sequence>
<comment type="function">
    <text evidence="4">Major facilitator transporter that contributes to the maintenance of intracellular siderophore ferricrocin (FC) levels (PubMed:28367141). Plays a role in conidiation and confers protection against oxidative stress (PubMed:28367141). Also contributes to fungal virulence in the Galleria mellonella animal model system (PubMed:28367141). Does not appear to play a role in either siderophore export or uptake (PubMed:28367141).</text>
</comment>
<comment type="subcellular location">
    <subcellularLocation>
        <location evidence="6">Membrane</location>
        <topology evidence="6">Multi-pass membrane protein</topology>
    </subcellularLocation>
    <text evidence="4">localizes intracellularly, possibly to vacuole-like structures, but not found in the plasma membrane or at the nucleus (PubMed:28367141).</text>
</comment>
<comment type="induction">
    <text evidence="4">Expression is induced under iron limitation (PubMed:28367141).</text>
</comment>
<comment type="disruption phenotype">
    <text evidence="4">Reduces growth under iron limitation and increases sensitivity to hydrogen peroxide (PubMed:28367141). Decreases intracellular ferricrocin level under iron limitation (PubMed:28367141). Leads to increased abundance of siderophore biosynthetic enzymes and of hapX (PubMed:28367141). Finally, decreases the virulence in the Galleria mellonella animal model system (PubMed:28367141).</text>
</comment>
<comment type="similarity">
    <text evidence="6">Belongs to the major facilitator superfamily.</text>
</comment>
<organism>
    <name type="scientific">Aspergillus fumigatus (strain ATCC MYA-4609 / CBS 101355 / FGSC A1100 / Af293)</name>
    <name type="common">Neosartorya fumigata</name>
    <dbReference type="NCBI Taxonomy" id="330879"/>
    <lineage>
        <taxon>Eukaryota</taxon>
        <taxon>Fungi</taxon>
        <taxon>Dikarya</taxon>
        <taxon>Ascomycota</taxon>
        <taxon>Pezizomycotina</taxon>
        <taxon>Eurotiomycetes</taxon>
        <taxon>Eurotiomycetidae</taxon>
        <taxon>Eurotiales</taxon>
        <taxon>Aspergillaceae</taxon>
        <taxon>Aspergillus</taxon>
        <taxon>Aspergillus subgen. Fumigati</taxon>
    </lineage>
</organism>
<reference key="1">
    <citation type="journal article" date="2005" name="Nature">
        <title>Genomic sequence of the pathogenic and allergenic filamentous fungus Aspergillus fumigatus.</title>
        <authorList>
            <person name="Nierman W.C."/>
            <person name="Pain A."/>
            <person name="Anderson M.J."/>
            <person name="Wortman J.R."/>
            <person name="Kim H.S."/>
            <person name="Arroyo J."/>
            <person name="Berriman M."/>
            <person name="Abe K."/>
            <person name="Archer D.B."/>
            <person name="Bermejo C."/>
            <person name="Bennett J.W."/>
            <person name="Bowyer P."/>
            <person name="Chen D."/>
            <person name="Collins M."/>
            <person name="Coulsen R."/>
            <person name="Davies R."/>
            <person name="Dyer P.S."/>
            <person name="Farman M.L."/>
            <person name="Fedorova N."/>
            <person name="Fedorova N.D."/>
            <person name="Feldblyum T.V."/>
            <person name="Fischer R."/>
            <person name="Fosker N."/>
            <person name="Fraser A."/>
            <person name="Garcia J.L."/>
            <person name="Garcia M.J."/>
            <person name="Goble A."/>
            <person name="Goldman G.H."/>
            <person name="Gomi K."/>
            <person name="Griffith-Jones S."/>
            <person name="Gwilliam R."/>
            <person name="Haas B.J."/>
            <person name="Haas H."/>
            <person name="Harris D.E."/>
            <person name="Horiuchi H."/>
            <person name="Huang J."/>
            <person name="Humphray S."/>
            <person name="Jimenez J."/>
            <person name="Keller N."/>
            <person name="Khouri H."/>
            <person name="Kitamoto K."/>
            <person name="Kobayashi T."/>
            <person name="Konzack S."/>
            <person name="Kulkarni R."/>
            <person name="Kumagai T."/>
            <person name="Lafton A."/>
            <person name="Latge J.-P."/>
            <person name="Li W."/>
            <person name="Lord A."/>
            <person name="Lu C."/>
            <person name="Majoros W.H."/>
            <person name="May G.S."/>
            <person name="Miller B.L."/>
            <person name="Mohamoud Y."/>
            <person name="Molina M."/>
            <person name="Monod M."/>
            <person name="Mouyna I."/>
            <person name="Mulligan S."/>
            <person name="Murphy L.D."/>
            <person name="O'Neil S."/>
            <person name="Paulsen I."/>
            <person name="Penalva M.A."/>
            <person name="Pertea M."/>
            <person name="Price C."/>
            <person name="Pritchard B.L."/>
            <person name="Quail M.A."/>
            <person name="Rabbinowitsch E."/>
            <person name="Rawlins N."/>
            <person name="Rajandream M.A."/>
            <person name="Reichard U."/>
            <person name="Renauld H."/>
            <person name="Robson G.D."/>
            <person name="Rodriguez de Cordoba S."/>
            <person name="Rodriguez-Pena J.M."/>
            <person name="Ronning C.M."/>
            <person name="Rutter S."/>
            <person name="Salzberg S.L."/>
            <person name="Sanchez M."/>
            <person name="Sanchez-Ferrero J.C."/>
            <person name="Saunders D."/>
            <person name="Seeger K."/>
            <person name="Squares R."/>
            <person name="Squares S."/>
            <person name="Takeuchi M."/>
            <person name="Tekaia F."/>
            <person name="Turner G."/>
            <person name="Vazquez de Aldana C.R."/>
            <person name="Weidman J."/>
            <person name="White O."/>
            <person name="Woodward J.R."/>
            <person name="Yu J.-H."/>
            <person name="Fraser C.M."/>
            <person name="Galagan J.E."/>
            <person name="Asai K."/>
            <person name="Machida M."/>
            <person name="Hall N."/>
            <person name="Barrell B.G."/>
            <person name="Denning D.W."/>
        </authorList>
    </citation>
    <scope>NUCLEOTIDE SEQUENCE [LARGE SCALE GENOMIC DNA]</scope>
    <source>
        <strain>ATCC MYA-4609 / CBS 101355 / FGSC A1100 / Af293</strain>
    </source>
</reference>
<reference key="2">
    <citation type="journal article" date="2017" name="Front. Microbiol.">
        <title>Functional investigation of iron-responsive microsomal proteins, including MirC, in Aspergillus fumigatus.</title>
        <authorList>
            <person name="Mulvihill E.D."/>
            <person name="Moloney N.M."/>
            <person name="Owens R.A."/>
            <person name="Dolan S.K."/>
            <person name="Russell L."/>
            <person name="Doyle S."/>
        </authorList>
    </citation>
    <scope>FUNCTION</scope>
    <scope>SUBCELLULAR LOCATION</scope>
    <scope>DISRUPTION PHENOTYPE</scope>
    <scope>INDUCTION</scope>
</reference>
<name>MIRC_ASPFU</name>
<gene>
    <name evidence="5" type="primary">mirC</name>
    <name type="ORF">AFUA_2G05730</name>
</gene>
<feature type="chain" id="PRO_0000444408" description="MFS siderochrome iron transporter C">
    <location>
        <begin position="1"/>
        <end position="611"/>
    </location>
</feature>
<feature type="transmembrane region" description="Helical" evidence="1">
    <location>
        <begin position="71"/>
        <end position="91"/>
    </location>
</feature>
<feature type="transmembrane region" description="Helical" evidence="1">
    <location>
        <begin position="107"/>
        <end position="127"/>
    </location>
</feature>
<feature type="transmembrane region" description="Helical" evidence="1">
    <location>
        <begin position="136"/>
        <end position="156"/>
    </location>
</feature>
<feature type="transmembrane region" description="Helical" evidence="1">
    <location>
        <begin position="165"/>
        <end position="185"/>
    </location>
</feature>
<feature type="transmembrane region" description="Helical" evidence="1">
    <location>
        <begin position="194"/>
        <end position="214"/>
    </location>
</feature>
<feature type="transmembrane region" description="Helical" evidence="1">
    <location>
        <begin position="228"/>
        <end position="248"/>
    </location>
</feature>
<feature type="transmembrane region" description="Helical" evidence="1">
    <location>
        <begin position="282"/>
        <end position="302"/>
    </location>
</feature>
<feature type="transmembrane region" description="Helical" evidence="1">
    <location>
        <begin position="313"/>
        <end position="333"/>
    </location>
</feature>
<feature type="transmembrane region" description="Helical" evidence="1">
    <location>
        <begin position="353"/>
        <end position="373"/>
    </location>
</feature>
<feature type="transmembrane region" description="Helical" evidence="1">
    <location>
        <begin position="393"/>
        <end position="413"/>
    </location>
</feature>
<feature type="transmembrane region" description="Helical" evidence="1">
    <location>
        <begin position="418"/>
        <end position="438"/>
    </location>
</feature>
<feature type="transmembrane region" description="Helical" evidence="1">
    <location>
        <begin position="449"/>
        <end position="469"/>
    </location>
</feature>
<feature type="transmembrane region" description="Helical" evidence="1">
    <location>
        <begin position="486"/>
        <end position="506"/>
    </location>
</feature>
<feature type="transmembrane region" description="Helical" evidence="1">
    <location>
        <begin position="560"/>
        <end position="580"/>
    </location>
</feature>
<feature type="region of interest" description="Disordered" evidence="3">
    <location>
        <begin position="1"/>
        <end position="25"/>
    </location>
</feature>
<feature type="region of interest" description="Disordered" evidence="3">
    <location>
        <begin position="592"/>
        <end position="611"/>
    </location>
</feature>
<feature type="glycosylation site" description="N-linked (GlcNAc...) asparagine" evidence="2">
    <location>
        <position position="62"/>
    </location>
</feature>
<protein>
    <recommendedName>
        <fullName evidence="5">MFS siderochrome iron transporter C</fullName>
    </recommendedName>
</protein>
<evidence type="ECO:0000255" key="1"/>
<evidence type="ECO:0000255" key="2">
    <source>
        <dbReference type="PROSITE-ProRule" id="PRU00498"/>
    </source>
</evidence>
<evidence type="ECO:0000256" key="3">
    <source>
        <dbReference type="SAM" id="MobiDB-lite"/>
    </source>
</evidence>
<evidence type="ECO:0000269" key="4">
    <source>
    </source>
</evidence>
<evidence type="ECO:0000303" key="5">
    <source>
    </source>
</evidence>
<evidence type="ECO:0000305" key="6"/>
<proteinExistence type="evidence at transcript level"/>